<proteinExistence type="inferred from homology"/>
<comment type="function">
    <text evidence="1">NTP-dependent helicase that catalyzes unidirectional unwinding of 3'tailed duplex RNAs and plays an important role during transcription of early mRNAs, presumably by preventing R-loop formation behind the elongating RNA polymerase. Might also play a role in the export of newly synthesized mRNA chains out of the core into the cytoplasm. Required for replication and propagation of viral particles (By similarity).</text>
</comment>
<comment type="catalytic activity">
    <reaction>
        <text>ATP + H2O = ADP + phosphate + H(+)</text>
        <dbReference type="Rhea" id="RHEA:13065"/>
        <dbReference type="ChEBI" id="CHEBI:15377"/>
        <dbReference type="ChEBI" id="CHEBI:15378"/>
        <dbReference type="ChEBI" id="CHEBI:30616"/>
        <dbReference type="ChEBI" id="CHEBI:43474"/>
        <dbReference type="ChEBI" id="CHEBI:456216"/>
        <dbReference type="EC" id="3.6.4.13"/>
    </reaction>
</comment>
<comment type="subunit">
    <text>Monomer.</text>
</comment>
<comment type="subcellular location">
    <subcellularLocation>
        <location>Virion</location>
    </subcellularLocation>
    <text evidence="1">Localizes to the virion core.</text>
</comment>
<comment type="similarity">
    <text evidence="4">Belongs to the DEAD box helicase family. DEAH subfamily.</text>
</comment>
<protein>
    <recommendedName>
        <fullName>RNA helicase NPH-II</fullName>
        <ecNumber>3.6.4.13</ecNumber>
    </recommendedName>
    <alternativeName>
        <fullName>Nucleoside triphosphatase II</fullName>
        <shortName>NTPase II</shortName>
    </alternativeName>
    <alternativeName>
        <fullName>Nucleoside triphosphate phosphohydrolase II</fullName>
        <shortName>NPH II</shortName>
    </alternativeName>
</protein>
<dbReference type="EC" id="3.6.4.13"/>
<dbReference type="EMBL" id="U60315">
    <property type="protein sequence ID" value="AAC55178.1"/>
    <property type="molecule type" value="Genomic_DNA"/>
</dbReference>
<dbReference type="PIR" id="T30652">
    <property type="entry name" value="T30652"/>
</dbReference>
<dbReference type="RefSeq" id="NP_044001.1">
    <property type="nucleotide sequence ID" value="NC_001731.1"/>
</dbReference>
<dbReference type="SMR" id="Q98218"/>
<dbReference type="KEGG" id="vg:1670235"/>
<dbReference type="OrthoDB" id="892at10239"/>
<dbReference type="Proteomes" id="UP000000869">
    <property type="component" value="Genome"/>
</dbReference>
<dbReference type="GO" id="GO:0044423">
    <property type="term" value="C:virion component"/>
    <property type="evidence" value="ECO:0007669"/>
    <property type="project" value="UniProtKB-KW"/>
</dbReference>
<dbReference type="GO" id="GO:0005524">
    <property type="term" value="F:ATP binding"/>
    <property type="evidence" value="ECO:0007669"/>
    <property type="project" value="UniProtKB-KW"/>
</dbReference>
<dbReference type="GO" id="GO:0016887">
    <property type="term" value="F:ATP hydrolysis activity"/>
    <property type="evidence" value="ECO:0007669"/>
    <property type="project" value="RHEA"/>
</dbReference>
<dbReference type="GO" id="GO:0003723">
    <property type="term" value="F:RNA binding"/>
    <property type="evidence" value="ECO:0007669"/>
    <property type="project" value="TreeGrafter"/>
</dbReference>
<dbReference type="GO" id="GO:0003724">
    <property type="term" value="F:RNA helicase activity"/>
    <property type="evidence" value="ECO:0007669"/>
    <property type="project" value="UniProtKB-EC"/>
</dbReference>
<dbReference type="Gene3D" id="3.40.50.300">
    <property type="entry name" value="P-loop containing nucleotide triphosphate hydrolases"/>
    <property type="match status" value="2"/>
</dbReference>
<dbReference type="InterPro" id="IPR002464">
    <property type="entry name" value="DNA/RNA_helicase_DEAH_CS"/>
</dbReference>
<dbReference type="InterPro" id="IPR014001">
    <property type="entry name" value="Helicase_ATP-bd"/>
</dbReference>
<dbReference type="InterPro" id="IPR001650">
    <property type="entry name" value="Helicase_C-like"/>
</dbReference>
<dbReference type="InterPro" id="IPR021892">
    <property type="entry name" value="NPH-II"/>
</dbReference>
<dbReference type="InterPro" id="IPR027417">
    <property type="entry name" value="P-loop_NTPase"/>
</dbReference>
<dbReference type="PANTHER" id="PTHR18934">
    <property type="entry name" value="ATP-DEPENDENT RNA HELICASE"/>
    <property type="match status" value="1"/>
</dbReference>
<dbReference type="PANTHER" id="PTHR18934:SF99">
    <property type="entry name" value="ATP-DEPENDENT RNA HELICASE DHX37-RELATED"/>
    <property type="match status" value="1"/>
</dbReference>
<dbReference type="Pfam" id="PF00271">
    <property type="entry name" value="Helicase_C"/>
    <property type="match status" value="1"/>
</dbReference>
<dbReference type="Pfam" id="PF12011">
    <property type="entry name" value="NPH-II"/>
    <property type="match status" value="1"/>
</dbReference>
<dbReference type="SMART" id="SM00487">
    <property type="entry name" value="DEXDc"/>
    <property type="match status" value="1"/>
</dbReference>
<dbReference type="SMART" id="SM00490">
    <property type="entry name" value="HELICc"/>
    <property type="match status" value="1"/>
</dbReference>
<dbReference type="SUPFAM" id="SSF52540">
    <property type="entry name" value="P-loop containing nucleoside triphosphate hydrolases"/>
    <property type="match status" value="1"/>
</dbReference>
<dbReference type="PROSITE" id="PS00690">
    <property type="entry name" value="DEAH_ATP_HELICASE"/>
    <property type="match status" value="1"/>
</dbReference>
<dbReference type="PROSITE" id="PS51192">
    <property type="entry name" value="HELICASE_ATP_BIND_1"/>
    <property type="match status" value="1"/>
</dbReference>
<dbReference type="PROSITE" id="PS51194">
    <property type="entry name" value="HELICASE_CTER"/>
    <property type="match status" value="1"/>
</dbReference>
<feature type="chain" id="PRO_0000055188" description="RNA helicase NPH-II">
    <location>
        <begin position="1"/>
        <end position="684"/>
    </location>
</feature>
<feature type="domain" description="Helicase ATP-binding" evidence="2">
    <location>
        <begin position="184"/>
        <end position="359"/>
    </location>
</feature>
<feature type="domain" description="Helicase C-terminal" evidence="3">
    <location>
        <begin position="392"/>
        <end position="563"/>
    </location>
</feature>
<feature type="short sequence motif" description="DEXH box">
    <location>
        <begin position="308"/>
        <end position="311"/>
    </location>
</feature>
<feature type="binding site" evidence="2">
    <location>
        <begin position="197"/>
        <end position="204"/>
    </location>
    <ligand>
        <name>ATP</name>
        <dbReference type="ChEBI" id="CHEBI:30616"/>
    </ligand>
</feature>
<organismHost>
    <name type="scientific">Homo sapiens</name>
    <name type="common">Human</name>
    <dbReference type="NCBI Taxonomy" id="9606"/>
</organismHost>
<name>NPH2_MCV1</name>
<reference key="1">
    <citation type="journal article" date="1996" name="Science">
        <title>Genome sequence of a human tumorigenic poxvirus: prediction of specific host response-evasion genes.</title>
        <authorList>
            <person name="Senkevich T.G."/>
            <person name="Bugert J.J."/>
            <person name="Sisler J.R."/>
            <person name="Koonin E.V."/>
            <person name="Darai G."/>
            <person name="Moss B."/>
        </authorList>
    </citation>
    <scope>NUCLEOTIDE SEQUENCE [LARGE SCALE GENOMIC DNA]</scope>
</reference>
<organism>
    <name type="scientific">Molluscum contagiosum virus subtype 1</name>
    <name type="common">MOCV</name>
    <name type="synonym">MCVI</name>
    <dbReference type="NCBI Taxonomy" id="10280"/>
    <lineage>
        <taxon>Viruses</taxon>
        <taxon>Varidnaviria</taxon>
        <taxon>Bamfordvirae</taxon>
        <taxon>Nucleocytoviricota</taxon>
        <taxon>Pokkesviricetes</taxon>
        <taxon>Chitovirales</taxon>
        <taxon>Poxviridae</taxon>
        <taxon>Chordopoxvirinae</taxon>
        <taxon>Molluscipoxvirus</taxon>
        <taxon>Molluscum contagiosum virus</taxon>
    </lineage>
</organism>
<evidence type="ECO:0000250" key="1"/>
<evidence type="ECO:0000255" key="2">
    <source>
        <dbReference type="PROSITE-ProRule" id="PRU00541"/>
    </source>
</evidence>
<evidence type="ECO:0000255" key="3">
    <source>
        <dbReference type="PROSITE-ProRule" id="PRU00542"/>
    </source>
</evidence>
<evidence type="ECO:0000305" key="4"/>
<keyword id="KW-0067">ATP-binding</keyword>
<keyword id="KW-0347">Helicase</keyword>
<keyword id="KW-0378">Hydrolase</keyword>
<keyword id="KW-0547">Nucleotide-binding</keyword>
<keyword id="KW-1185">Reference proteome</keyword>
<keyword id="KW-0804">Transcription</keyword>
<keyword id="KW-0946">Virion</keyword>
<sequence length="684" mass="76557">MKNLPGVFAFPDNETIFAHAYSQRELEAMLPARAGAQPHAFAYAAWPLSKHRWRGAFVCRQRGVLKLNLELDAGAFERVPRSEAERFEPEQSDARALMHRGADGTVMSFECYSFLRCRPGLELREAGLALLRGLVVGGNRMRIFSGVRRAGASAATSAGMLGNESPFERAPFASLRIDAQAALFRAWAARRPTVVTGGTGVGKTSQVPKLLLWFNYLFGGTEDLDVLAPARERPVVLSLPRVALVRMNGHALRRALGFDALEGSPVELRYGDLAPADANSSRSPFRLVVSTNQLTLGALFAHGTVILDEVHEHDQMADIMLAVLRVHRARVDSIVLMSATLEDDRERLQEFFPDAEFVHIPGSTRFEIRGVYVRNSSDPRDARAYDEEERRNVSAALSAHRPRAGRCGILFVASVAQCEDYARLLTREHPELGVYVVHGKTPNVDALLAEVYASARPCVLVSTPYLESSVTIRTVTHVYDTGRVFVPAPFGGRQMLISPAMRTQRRGRVGRVMPGTYVYFYDPARLAPIKRIDSEFLYNYIIYARHYGLVLPDDLYVQPSDLELLRRCEEYLDGFGLAPERLFELASTRYLRMVEYAKIYARGGARAEELNRFERDGVVTEDVLASIRALNLRARVLSARARRGQFLHTCEVAFGPYAGTRFLLANRRRLRGDIFMVTERSFVL</sequence>
<gene>
    <name type="primary">NPH2</name>
    <name type="ORF">50R</name>
</gene>
<accession>Q98218</accession>